<keyword id="KW-1185">Reference proteome</keyword>
<accession>O31968</accession>
<organism>
    <name type="scientific">Bacillus subtilis (strain 168)</name>
    <dbReference type="NCBI Taxonomy" id="224308"/>
    <lineage>
        <taxon>Bacteria</taxon>
        <taxon>Bacillati</taxon>
        <taxon>Bacillota</taxon>
        <taxon>Bacilli</taxon>
        <taxon>Bacillales</taxon>
        <taxon>Bacillaceae</taxon>
        <taxon>Bacillus</taxon>
    </lineage>
</organism>
<name>YOMP_BACSU</name>
<reference key="1">
    <citation type="journal article" date="1997" name="Nature">
        <title>The complete genome sequence of the Gram-positive bacterium Bacillus subtilis.</title>
        <authorList>
            <person name="Kunst F."/>
            <person name="Ogasawara N."/>
            <person name="Moszer I."/>
            <person name="Albertini A.M."/>
            <person name="Alloni G."/>
            <person name="Azevedo V."/>
            <person name="Bertero M.G."/>
            <person name="Bessieres P."/>
            <person name="Bolotin A."/>
            <person name="Borchert S."/>
            <person name="Borriss R."/>
            <person name="Boursier L."/>
            <person name="Brans A."/>
            <person name="Braun M."/>
            <person name="Brignell S.C."/>
            <person name="Bron S."/>
            <person name="Brouillet S."/>
            <person name="Bruschi C.V."/>
            <person name="Caldwell B."/>
            <person name="Capuano V."/>
            <person name="Carter N.M."/>
            <person name="Choi S.-K."/>
            <person name="Codani J.-J."/>
            <person name="Connerton I.F."/>
            <person name="Cummings N.J."/>
            <person name="Daniel R.A."/>
            <person name="Denizot F."/>
            <person name="Devine K.M."/>
            <person name="Duesterhoeft A."/>
            <person name="Ehrlich S.D."/>
            <person name="Emmerson P.T."/>
            <person name="Entian K.-D."/>
            <person name="Errington J."/>
            <person name="Fabret C."/>
            <person name="Ferrari E."/>
            <person name="Foulger D."/>
            <person name="Fritz C."/>
            <person name="Fujita M."/>
            <person name="Fujita Y."/>
            <person name="Fuma S."/>
            <person name="Galizzi A."/>
            <person name="Galleron N."/>
            <person name="Ghim S.-Y."/>
            <person name="Glaser P."/>
            <person name="Goffeau A."/>
            <person name="Golightly E.J."/>
            <person name="Grandi G."/>
            <person name="Guiseppi G."/>
            <person name="Guy B.J."/>
            <person name="Haga K."/>
            <person name="Haiech J."/>
            <person name="Harwood C.R."/>
            <person name="Henaut A."/>
            <person name="Hilbert H."/>
            <person name="Holsappel S."/>
            <person name="Hosono S."/>
            <person name="Hullo M.-F."/>
            <person name="Itaya M."/>
            <person name="Jones L.-M."/>
            <person name="Joris B."/>
            <person name="Karamata D."/>
            <person name="Kasahara Y."/>
            <person name="Klaerr-Blanchard M."/>
            <person name="Klein C."/>
            <person name="Kobayashi Y."/>
            <person name="Koetter P."/>
            <person name="Koningstein G."/>
            <person name="Krogh S."/>
            <person name="Kumano M."/>
            <person name="Kurita K."/>
            <person name="Lapidus A."/>
            <person name="Lardinois S."/>
            <person name="Lauber J."/>
            <person name="Lazarevic V."/>
            <person name="Lee S.-M."/>
            <person name="Levine A."/>
            <person name="Liu H."/>
            <person name="Masuda S."/>
            <person name="Mauel C."/>
            <person name="Medigue C."/>
            <person name="Medina N."/>
            <person name="Mellado R.P."/>
            <person name="Mizuno M."/>
            <person name="Moestl D."/>
            <person name="Nakai S."/>
            <person name="Noback M."/>
            <person name="Noone D."/>
            <person name="O'Reilly M."/>
            <person name="Ogawa K."/>
            <person name="Ogiwara A."/>
            <person name="Oudega B."/>
            <person name="Park S.-H."/>
            <person name="Parro V."/>
            <person name="Pohl T.M."/>
            <person name="Portetelle D."/>
            <person name="Porwollik S."/>
            <person name="Prescott A.M."/>
            <person name="Presecan E."/>
            <person name="Pujic P."/>
            <person name="Purnelle B."/>
            <person name="Rapoport G."/>
            <person name="Rey M."/>
            <person name="Reynolds S."/>
            <person name="Rieger M."/>
            <person name="Rivolta C."/>
            <person name="Rocha E."/>
            <person name="Roche B."/>
            <person name="Rose M."/>
            <person name="Sadaie Y."/>
            <person name="Sato T."/>
            <person name="Scanlan E."/>
            <person name="Schleich S."/>
            <person name="Schroeter R."/>
            <person name="Scoffone F."/>
            <person name="Sekiguchi J."/>
            <person name="Sekowska A."/>
            <person name="Seror S.J."/>
            <person name="Serror P."/>
            <person name="Shin B.-S."/>
            <person name="Soldo B."/>
            <person name="Sorokin A."/>
            <person name="Tacconi E."/>
            <person name="Takagi T."/>
            <person name="Takahashi H."/>
            <person name="Takemaru K."/>
            <person name="Takeuchi M."/>
            <person name="Tamakoshi A."/>
            <person name="Tanaka T."/>
            <person name="Terpstra P."/>
            <person name="Tognoni A."/>
            <person name="Tosato V."/>
            <person name="Uchiyama S."/>
            <person name="Vandenbol M."/>
            <person name="Vannier F."/>
            <person name="Vassarotti A."/>
            <person name="Viari A."/>
            <person name="Wambutt R."/>
            <person name="Wedler E."/>
            <person name="Wedler H."/>
            <person name="Weitzenegger T."/>
            <person name="Winters P."/>
            <person name="Wipat A."/>
            <person name="Yamamoto H."/>
            <person name="Yamane K."/>
            <person name="Yasumoto K."/>
            <person name="Yata K."/>
            <person name="Yoshida K."/>
            <person name="Yoshikawa H.-F."/>
            <person name="Zumstein E."/>
            <person name="Yoshikawa H."/>
            <person name="Danchin A."/>
        </authorList>
    </citation>
    <scope>NUCLEOTIDE SEQUENCE [LARGE SCALE GENOMIC DNA]</scope>
    <source>
        <strain>168</strain>
    </source>
</reference>
<protein>
    <recommendedName>
        <fullName>SPbeta prophage-derived uncharacterized protein YomP</fullName>
    </recommendedName>
</protein>
<feature type="chain" id="PRO_0000360452" description="SPbeta prophage-derived uncharacterized protein YomP">
    <location>
        <begin position="1"/>
        <end position="63"/>
    </location>
</feature>
<proteinExistence type="predicted"/>
<dbReference type="EMBL" id="AL009126">
    <property type="protein sequence ID" value="CAB14045.1"/>
    <property type="molecule type" value="Genomic_DNA"/>
</dbReference>
<dbReference type="RefSeq" id="NP_390010.1">
    <property type="nucleotide sequence ID" value="NC_000964.3"/>
</dbReference>
<dbReference type="RefSeq" id="WP_004399574.1">
    <property type="nucleotide sequence ID" value="NZ_OZ025638.1"/>
</dbReference>
<dbReference type="SMR" id="O31968"/>
<dbReference type="FunCoup" id="O31968">
    <property type="interactions" value="68"/>
</dbReference>
<dbReference type="STRING" id="224308.BSU21270"/>
<dbReference type="PaxDb" id="224308-BSU21270"/>
<dbReference type="EnsemblBacteria" id="CAB14045">
    <property type="protein sequence ID" value="CAB14045"/>
    <property type="gene ID" value="BSU_21270"/>
</dbReference>
<dbReference type="GeneID" id="939148"/>
<dbReference type="KEGG" id="bsu:BSU21270"/>
<dbReference type="PATRIC" id="fig|224308.179.peg.2322"/>
<dbReference type="InParanoid" id="O31968"/>
<dbReference type="OrthoDB" id="2891646at2"/>
<dbReference type="PhylomeDB" id="O31968"/>
<dbReference type="BioCyc" id="BSUB:BSU21270-MONOMER"/>
<dbReference type="Proteomes" id="UP000001570">
    <property type="component" value="Chromosome"/>
</dbReference>
<dbReference type="InterPro" id="IPR010022">
    <property type="entry name" value="XkdX"/>
</dbReference>
<dbReference type="NCBIfam" id="TIGR01669">
    <property type="entry name" value="phage_XkdX"/>
    <property type="match status" value="1"/>
</dbReference>
<dbReference type="Pfam" id="PF09693">
    <property type="entry name" value="Phage_XkdX"/>
    <property type="match status" value="1"/>
</dbReference>
<sequence>MSNFWVIALNKNWATLDQVKEAYYYDDVTKEELKEGVDNNLITPEQYQEIVGEAYTSVTLSTE</sequence>
<gene>
    <name type="primary">yomP</name>
    <name type="ordered locus">BSU21270</name>
</gene>